<reference key="1">
    <citation type="journal article" date="2004" name="Genome Res.">
        <title>The status, quality, and expansion of the NIH full-length cDNA project: the Mammalian Gene Collection (MGC).</title>
        <authorList>
            <consortium name="The MGC Project Team"/>
        </authorList>
    </citation>
    <scope>NUCLEOTIDE SEQUENCE [LARGE SCALE MRNA]</scope>
    <source>
        <tissue>Heart</tissue>
    </source>
</reference>
<reference key="2">
    <citation type="journal article" date="2012" name="Cell Metab.">
        <title>Complexome profiling identifies TMEM126B as a component of the mitochondrial complex I assembly complex.</title>
        <authorList>
            <person name="Heide H."/>
            <person name="Bleier L."/>
            <person name="Steger M."/>
            <person name="Ackermann J."/>
            <person name="Drose S."/>
            <person name="Schwamb B."/>
            <person name="Zornig M."/>
            <person name="Reichert A.S."/>
            <person name="Koch I."/>
            <person name="Wittig I."/>
            <person name="Brandt U."/>
        </authorList>
    </citation>
    <scope>IDENTIFICATION IN THE MCIA COMPLEX</scope>
    <scope>FUNCTION</scope>
</reference>
<feature type="transit peptide" description="Mitochondrion" evidence="3">
    <location>
        <begin position="1"/>
        <end position="48"/>
    </location>
</feature>
<feature type="chain" id="PRO_0000291988" description="Evolutionarily conserved signaling intermediate in Toll pathway, mitochondrial">
    <location>
        <begin position="49"/>
        <end position="434"/>
    </location>
</feature>
<feature type="region of interest" description="Disordered" evidence="4">
    <location>
        <begin position="403"/>
        <end position="434"/>
    </location>
</feature>
<feature type="cross-link" description="Glycyl lysine isopeptide (Lys-Gly) (interchain with G-Cter in ubiquitin)" evidence="1">
    <location>
        <position position="371"/>
    </location>
</feature>
<sequence>MSWVQVNLLARGLSRGWGSICRTVLSGTPFAQPSLQARGLHCSAVTHKDDVWLVPRPSEPQKKPIKVPAMHEDLFRPSGNGEQDKASFLNAVRSFGEHNVRKRGHVDFIYLALRKMPEFGVERDLSVYNLLLDVFPKEVFRPRNAIQRIFVHYPRQQECGVAVLEQMERHGVMPNTETEFLLIQVFGHKSYPMLKFLRMKLWFTRFKNINPYPVPRDLPQDPLDLAKLGLRHMEPDLSAKVTVYQMSLPSESTGIEDPTQPHIVGIQSPDQQAALARHNPSRPVFVEGPFPLWLRNKCVYYHILRADLPPPEEETVEEIPEEWNLYYPMQLDLEYSRSAWDNYEFDMDEVTEGPVFAMCMTGAHDQATLVKWIQGLQETNPTLAQIPVVFRLARSTGELLATTRLEGQSPPHSPPKGPEEDDEAIQAQQRQGQS</sequence>
<evidence type="ECO:0000250" key="1">
    <source>
        <dbReference type="UniProtKB" id="Q9BQ95"/>
    </source>
</evidence>
<evidence type="ECO:0000250" key="2">
    <source>
        <dbReference type="UniProtKB" id="Q9QZH6"/>
    </source>
</evidence>
<evidence type="ECO:0000255" key="3"/>
<evidence type="ECO:0000256" key="4">
    <source>
        <dbReference type="SAM" id="MobiDB-lite"/>
    </source>
</evidence>
<evidence type="ECO:0000269" key="5">
    <source>
    </source>
</evidence>
<evidence type="ECO:0000305" key="6"/>
<evidence type="ECO:0000312" key="7">
    <source>
        <dbReference type="RGD" id="1359488"/>
    </source>
</evidence>
<protein>
    <recommendedName>
        <fullName evidence="6">Evolutionarily conserved signaling intermediate in Toll pathway, mitochondrial</fullName>
    </recommendedName>
</protein>
<organism>
    <name type="scientific">Rattus norvegicus</name>
    <name type="common">Rat</name>
    <dbReference type="NCBI Taxonomy" id="10116"/>
    <lineage>
        <taxon>Eukaryota</taxon>
        <taxon>Metazoa</taxon>
        <taxon>Chordata</taxon>
        <taxon>Craniata</taxon>
        <taxon>Vertebrata</taxon>
        <taxon>Euteleostomi</taxon>
        <taxon>Mammalia</taxon>
        <taxon>Eutheria</taxon>
        <taxon>Euarchontoglires</taxon>
        <taxon>Glires</taxon>
        <taxon>Rodentia</taxon>
        <taxon>Myomorpha</taxon>
        <taxon>Muroidea</taxon>
        <taxon>Muridae</taxon>
        <taxon>Murinae</taxon>
        <taxon>Rattus</taxon>
    </lineage>
</organism>
<gene>
    <name evidence="7" type="primary">Ecsit</name>
</gene>
<proteinExistence type="evidence at protein level"/>
<name>ECSIT_RAT</name>
<accession>Q5XIC2</accession>
<dbReference type="EMBL" id="BC083762">
    <property type="protein sequence ID" value="AAH83762.1"/>
    <property type="molecule type" value="mRNA"/>
</dbReference>
<dbReference type="RefSeq" id="NP_001006987.1">
    <property type="nucleotide sequence ID" value="NM_001006986.1"/>
</dbReference>
<dbReference type="RefSeq" id="XP_006242700.1">
    <property type="nucleotide sequence ID" value="XM_006242638.5"/>
</dbReference>
<dbReference type="RefSeq" id="XP_038936941.1">
    <property type="nucleotide sequence ID" value="XM_039081013.2"/>
</dbReference>
<dbReference type="FunCoup" id="Q5XIC2">
    <property type="interactions" value="1292"/>
</dbReference>
<dbReference type="STRING" id="10116.ENSRNOP00000019115"/>
<dbReference type="iPTMnet" id="Q5XIC2"/>
<dbReference type="PhosphoSitePlus" id="Q5XIC2"/>
<dbReference type="SwissPalm" id="Q5XIC2"/>
<dbReference type="jPOST" id="Q5XIC2"/>
<dbReference type="PaxDb" id="10116-ENSRNOP00000019115"/>
<dbReference type="Ensembl" id="ENSRNOT00000019115.6">
    <property type="protein sequence ID" value="ENSRNOP00000019115.3"/>
    <property type="gene ID" value="ENSRNOG00000014128.6"/>
</dbReference>
<dbReference type="GeneID" id="300447"/>
<dbReference type="KEGG" id="rno:300447"/>
<dbReference type="UCSC" id="RGD:1359488">
    <property type="organism name" value="rat"/>
</dbReference>
<dbReference type="AGR" id="RGD:1359488"/>
<dbReference type="CTD" id="51295"/>
<dbReference type="RGD" id="1359488">
    <property type="gene designation" value="Ecsit"/>
</dbReference>
<dbReference type="eggNOG" id="KOG3941">
    <property type="taxonomic scope" value="Eukaryota"/>
</dbReference>
<dbReference type="GeneTree" id="ENSGT00390000005147"/>
<dbReference type="HOGENOM" id="CLU_046917_0_0_1"/>
<dbReference type="InParanoid" id="Q5XIC2"/>
<dbReference type="OMA" id="GPFHIWL"/>
<dbReference type="PhylomeDB" id="Q5XIC2"/>
<dbReference type="TreeFam" id="TF314943"/>
<dbReference type="Reactome" id="R-RNO-166058">
    <property type="pathway name" value="MyD88:MAL(TIRAP) cascade initiated on plasma membrane"/>
</dbReference>
<dbReference type="Reactome" id="R-RNO-6799198">
    <property type="pathway name" value="Complex I biogenesis"/>
</dbReference>
<dbReference type="Reactome" id="R-RNO-975138">
    <property type="pathway name" value="TRAF6 mediated induction of NFkB and MAP kinases upon TLR7/8 or 9 activation"/>
</dbReference>
<dbReference type="Reactome" id="R-RNO-975871">
    <property type="pathway name" value="MyD88 cascade initiated on plasma membrane"/>
</dbReference>
<dbReference type="PRO" id="PR:Q5XIC2"/>
<dbReference type="Proteomes" id="UP000002494">
    <property type="component" value="Chromosome 8"/>
</dbReference>
<dbReference type="Bgee" id="ENSRNOG00000014128">
    <property type="expression patterns" value="Expressed in heart and 20 other cell types or tissues"/>
</dbReference>
<dbReference type="GO" id="GO:0005737">
    <property type="term" value="C:cytoplasm"/>
    <property type="evidence" value="ECO:0000250"/>
    <property type="project" value="UniProtKB"/>
</dbReference>
<dbReference type="GO" id="GO:0005829">
    <property type="term" value="C:cytosol"/>
    <property type="evidence" value="ECO:0007669"/>
    <property type="project" value="Ensembl"/>
</dbReference>
<dbReference type="GO" id="GO:0005739">
    <property type="term" value="C:mitochondrion"/>
    <property type="evidence" value="ECO:0000250"/>
    <property type="project" value="UniProtKB"/>
</dbReference>
<dbReference type="GO" id="GO:0005654">
    <property type="term" value="C:nucleoplasm"/>
    <property type="evidence" value="ECO:0007669"/>
    <property type="project" value="Ensembl"/>
</dbReference>
<dbReference type="GO" id="GO:0005634">
    <property type="term" value="C:nucleus"/>
    <property type="evidence" value="ECO:0000250"/>
    <property type="project" value="UniProtKB"/>
</dbReference>
<dbReference type="GO" id="GO:0005667">
    <property type="term" value="C:transcription regulator complex"/>
    <property type="evidence" value="ECO:0000266"/>
    <property type="project" value="RGD"/>
</dbReference>
<dbReference type="GO" id="GO:0003682">
    <property type="term" value="F:chromatin binding"/>
    <property type="evidence" value="ECO:0000266"/>
    <property type="project" value="RGD"/>
</dbReference>
<dbReference type="GO" id="GO:0003700">
    <property type="term" value="F:DNA-binding transcription factor activity"/>
    <property type="evidence" value="ECO:0000266"/>
    <property type="project" value="RGD"/>
</dbReference>
<dbReference type="GO" id="GO:0060090">
    <property type="term" value="F:molecular adaptor activity"/>
    <property type="evidence" value="ECO:0000266"/>
    <property type="project" value="RGD"/>
</dbReference>
<dbReference type="GO" id="GO:0030509">
    <property type="term" value="P:BMP signaling pathway"/>
    <property type="evidence" value="ECO:0000266"/>
    <property type="project" value="RGD"/>
</dbReference>
<dbReference type="GO" id="GO:0007178">
    <property type="term" value="P:cell surface receptor protein serine/threonine kinase signaling pathway"/>
    <property type="evidence" value="ECO:0000266"/>
    <property type="project" value="RGD"/>
</dbReference>
<dbReference type="GO" id="GO:0045087">
    <property type="term" value="P:innate immune response"/>
    <property type="evidence" value="ECO:0000318"/>
    <property type="project" value="GO_Central"/>
</dbReference>
<dbReference type="GO" id="GO:0001707">
    <property type="term" value="P:mesoderm formation"/>
    <property type="evidence" value="ECO:0000266"/>
    <property type="project" value="RGD"/>
</dbReference>
<dbReference type="GO" id="GO:0051341">
    <property type="term" value="P:regulation of oxidoreductase activity"/>
    <property type="evidence" value="ECO:0000250"/>
    <property type="project" value="UniProtKB"/>
</dbReference>
<dbReference type="GO" id="GO:0061635">
    <property type="term" value="P:regulation of protein complex stability"/>
    <property type="evidence" value="ECO:0000250"/>
    <property type="project" value="UniProtKB"/>
</dbReference>
<dbReference type="GO" id="GO:0006357">
    <property type="term" value="P:regulation of transcription by RNA polymerase II"/>
    <property type="evidence" value="ECO:0000266"/>
    <property type="project" value="RGD"/>
</dbReference>
<dbReference type="GO" id="GO:0034142">
    <property type="term" value="P:toll-like receptor 4 signaling pathway"/>
    <property type="evidence" value="ECO:0000266"/>
    <property type="project" value="RGD"/>
</dbReference>
<dbReference type="InterPro" id="IPR029342">
    <property type="entry name" value="ECIST_C"/>
</dbReference>
<dbReference type="InterPro" id="IPR010418">
    <property type="entry name" value="ECSIT"/>
</dbReference>
<dbReference type="InterPro" id="IPR046448">
    <property type="entry name" value="ECSIT_N"/>
</dbReference>
<dbReference type="PANTHER" id="PTHR13113">
    <property type="entry name" value="ECSIT EVOLUTIONARILY CONSERVED SIGNALING INTERMEDIATE IN TOLL PATHWAYS"/>
    <property type="match status" value="1"/>
</dbReference>
<dbReference type="PANTHER" id="PTHR13113:SF1">
    <property type="entry name" value="EVOLUTIONARILY CONSERVED SIGNALING INTERMEDIATE IN TOLL PATHWAY, MITOCHONDRIAL"/>
    <property type="match status" value="1"/>
</dbReference>
<dbReference type="Pfam" id="PF14784">
    <property type="entry name" value="ECSIT_C"/>
    <property type="match status" value="1"/>
</dbReference>
<dbReference type="Pfam" id="PF06239">
    <property type="entry name" value="ECSIT_N"/>
    <property type="match status" value="1"/>
</dbReference>
<dbReference type="SMART" id="SM01284">
    <property type="entry name" value="ECSIT_Cterm"/>
    <property type="match status" value="1"/>
</dbReference>
<keyword id="KW-0963">Cytoplasm</keyword>
<keyword id="KW-0391">Immunity</keyword>
<keyword id="KW-0399">Innate immunity</keyword>
<keyword id="KW-1017">Isopeptide bond</keyword>
<keyword id="KW-0496">Mitochondrion</keyword>
<keyword id="KW-0539">Nucleus</keyword>
<keyword id="KW-1185">Reference proteome</keyword>
<keyword id="KW-0809">Transit peptide</keyword>
<keyword id="KW-0832">Ubl conjugation</keyword>
<comment type="function">
    <text evidence="1 2">Adapter protein that plays a role in different signaling pathways including TLRs and IL-1 pathways or innate antiviral induction signaling. Plays a role in the activation of NF-kappa-B by forming a signal complex with TRAF6 and TAK1/MAP3K7 to activate TAK1/MAP3K7 leading to activation of IKKs. Once ubiquitinated, interacts with the dissociated RELA and NFKB1 proteins and translocates to the nucleus where it induces NF-kappa-B-dependent gene expression. Plays a role in innate antiviral immune response by bridging the pattern recognition receptors RIGI and MDA5/IFIT1 to the MAVS complex at the mitochondrion (By similarity). Promotes proteolytic activation of MAP3K1. Involved in the BMP signaling pathway. Required for normal embryonic development (By similarity).</text>
</comment>
<comment type="function">
    <text evidence="5">As part of the MCIA complex, involved in the assembly of the mitochondrial complex I.</text>
</comment>
<comment type="subunit">
    <text evidence="1 2">Interacts with MAP3K1, SMAD4 and TRAF6. Interacts with SMAD1 only after BMP4-treatment (By similarity). Part of the mitochondrial complex I assembly/MCIA complex that comprises at least the core subunits TMEM126B, NDUFAF1, ECSIT and ACAD9 and complement subunits such as COA1 and TMEM186. Interacts with NDUFAF1. Interacts with ACAD9. Interacts with TRIM59. Interacts with TMEM70 and TMEM242. Interacts (when ubiquitinated) with NF-kappa-B subunits RELA and NFKB1. Interacts with RIGI, IFIT1 and MAVS; these interactions promote RLR-mediated type I IFN induction. Interacts with SQSTM1; this interaction inhibits TLR4 signaling via functional regulation of the TRAF6-ECSIT complex. Interacts with cereblon/CRBN; this interaction inhibits the ubiquitination of ECSIT (By similarity).</text>
</comment>
<comment type="subcellular location">
    <subcellularLocation>
        <location evidence="1">Cytoplasm</location>
    </subcellularLocation>
    <subcellularLocation>
        <location evidence="1">Nucleus</location>
    </subcellularLocation>
    <subcellularLocation>
        <location evidence="1">Mitochondrion</location>
    </subcellularLocation>
</comment>
<comment type="PTM">
    <text evidence="1">Ubiquitinated on Lys-371; leading to translocation in the nucleus together with RELA and NFKB1 and expression of NF-kappa-B-dependent genes.</text>
</comment>
<comment type="similarity">
    <text evidence="6">Belongs to the ECSIT family.</text>
</comment>